<feature type="initiator methionine" description="Removed" evidence="1">
    <location>
        <position position="1"/>
    </location>
</feature>
<feature type="chain" id="PRO_1000008697" description="Formamidopyrimidine-DNA glycosylase">
    <location>
        <begin position="2"/>
        <end position="269"/>
    </location>
</feature>
<feature type="zinc finger region" description="FPG-type" evidence="2">
    <location>
        <begin position="235"/>
        <end position="269"/>
    </location>
</feature>
<feature type="active site" description="Schiff-base intermediate with DNA" evidence="2">
    <location>
        <position position="2"/>
    </location>
</feature>
<feature type="active site" description="Proton donor" evidence="2">
    <location>
        <position position="3"/>
    </location>
</feature>
<feature type="active site" description="Proton donor; for beta-elimination activity" evidence="2">
    <location>
        <position position="57"/>
    </location>
</feature>
<feature type="active site" description="Proton donor; for delta-elimination activity" evidence="2">
    <location>
        <position position="259"/>
    </location>
</feature>
<feature type="binding site" evidence="2">
    <location>
        <position position="90"/>
    </location>
    <ligand>
        <name>DNA</name>
        <dbReference type="ChEBI" id="CHEBI:16991"/>
    </ligand>
</feature>
<feature type="binding site" evidence="2">
    <location>
        <position position="109"/>
    </location>
    <ligand>
        <name>DNA</name>
        <dbReference type="ChEBI" id="CHEBI:16991"/>
    </ligand>
</feature>
<feature type="binding site" evidence="2">
    <location>
        <position position="150"/>
    </location>
    <ligand>
        <name>DNA</name>
        <dbReference type="ChEBI" id="CHEBI:16991"/>
    </ligand>
</feature>
<reference key="1">
    <citation type="journal article" date="2010" name="PLoS ONE">
        <title>Genome sequence of Cronobacter sakazakii BAA-894 and comparative genomic hybridization analysis with other Cronobacter species.</title>
        <authorList>
            <person name="Kucerova E."/>
            <person name="Clifton S.W."/>
            <person name="Xia X.Q."/>
            <person name="Long F."/>
            <person name="Porwollik S."/>
            <person name="Fulton L."/>
            <person name="Fronick C."/>
            <person name="Minx P."/>
            <person name="Kyung K."/>
            <person name="Warren W."/>
            <person name="Fulton R."/>
            <person name="Feng D."/>
            <person name="Wollam A."/>
            <person name="Shah N."/>
            <person name="Bhonagiri V."/>
            <person name="Nash W.E."/>
            <person name="Hallsworth-Pepin K."/>
            <person name="Wilson R.K."/>
            <person name="McClelland M."/>
            <person name="Forsythe S.J."/>
        </authorList>
    </citation>
    <scope>NUCLEOTIDE SEQUENCE [LARGE SCALE GENOMIC DNA]</scope>
    <source>
        <strain>ATCC BAA-894</strain>
    </source>
</reference>
<dbReference type="EC" id="3.2.2.23" evidence="2"/>
<dbReference type="EC" id="4.2.99.18" evidence="2"/>
<dbReference type="EMBL" id="CP000783">
    <property type="protein sequence ID" value="ABU79277.1"/>
    <property type="molecule type" value="Genomic_DNA"/>
</dbReference>
<dbReference type="RefSeq" id="WP_004388472.1">
    <property type="nucleotide sequence ID" value="NC_009778.1"/>
</dbReference>
<dbReference type="SMR" id="A7MQ97"/>
<dbReference type="GeneID" id="56732730"/>
<dbReference type="KEGG" id="esa:ESA_04096"/>
<dbReference type="HOGENOM" id="CLU_038423_1_1_6"/>
<dbReference type="Proteomes" id="UP000000260">
    <property type="component" value="Chromosome"/>
</dbReference>
<dbReference type="GO" id="GO:0034039">
    <property type="term" value="F:8-oxo-7,8-dihydroguanine DNA N-glycosylase activity"/>
    <property type="evidence" value="ECO:0007669"/>
    <property type="project" value="TreeGrafter"/>
</dbReference>
<dbReference type="GO" id="GO:0140078">
    <property type="term" value="F:class I DNA-(apurinic or apyrimidinic site) endonuclease activity"/>
    <property type="evidence" value="ECO:0007669"/>
    <property type="project" value="UniProtKB-EC"/>
</dbReference>
<dbReference type="GO" id="GO:0003684">
    <property type="term" value="F:damaged DNA binding"/>
    <property type="evidence" value="ECO:0007669"/>
    <property type="project" value="InterPro"/>
</dbReference>
<dbReference type="GO" id="GO:0008270">
    <property type="term" value="F:zinc ion binding"/>
    <property type="evidence" value="ECO:0007669"/>
    <property type="project" value="UniProtKB-UniRule"/>
</dbReference>
<dbReference type="GO" id="GO:0006284">
    <property type="term" value="P:base-excision repair"/>
    <property type="evidence" value="ECO:0007669"/>
    <property type="project" value="InterPro"/>
</dbReference>
<dbReference type="CDD" id="cd08966">
    <property type="entry name" value="EcFpg-like_N"/>
    <property type="match status" value="1"/>
</dbReference>
<dbReference type="FunFam" id="1.10.8.50:FF:000003">
    <property type="entry name" value="Formamidopyrimidine-DNA glycosylase"/>
    <property type="match status" value="1"/>
</dbReference>
<dbReference type="FunFam" id="3.20.190.10:FF:000001">
    <property type="entry name" value="Formamidopyrimidine-DNA glycosylase"/>
    <property type="match status" value="1"/>
</dbReference>
<dbReference type="Gene3D" id="1.10.8.50">
    <property type="match status" value="1"/>
</dbReference>
<dbReference type="Gene3D" id="3.20.190.10">
    <property type="entry name" value="MutM-like, N-terminal"/>
    <property type="match status" value="1"/>
</dbReference>
<dbReference type="HAMAP" id="MF_00103">
    <property type="entry name" value="Fapy_DNA_glycosyl"/>
    <property type="match status" value="1"/>
</dbReference>
<dbReference type="InterPro" id="IPR015886">
    <property type="entry name" value="DNA_glyclase/AP_lyase_DNA-bd"/>
</dbReference>
<dbReference type="InterPro" id="IPR020629">
    <property type="entry name" value="Formamido-pyr_DNA_Glyclase"/>
</dbReference>
<dbReference type="InterPro" id="IPR012319">
    <property type="entry name" value="FPG_cat"/>
</dbReference>
<dbReference type="InterPro" id="IPR035937">
    <property type="entry name" value="MutM-like_N-ter"/>
</dbReference>
<dbReference type="InterPro" id="IPR010979">
    <property type="entry name" value="Ribosomal_uS13-like_H2TH"/>
</dbReference>
<dbReference type="InterPro" id="IPR000214">
    <property type="entry name" value="Znf_DNA_glyclase/AP_lyase"/>
</dbReference>
<dbReference type="InterPro" id="IPR010663">
    <property type="entry name" value="Znf_FPG/IleRS"/>
</dbReference>
<dbReference type="NCBIfam" id="TIGR00577">
    <property type="entry name" value="fpg"/>
    <property type="match status" value="1"/>
</dbReference>
<dbReference type="NCBIfam" id="NF002211">
    <property type="entry name" value="PRK01103.1"/>
    <property type="match status" value="1"/>
</dbReference>
<dbReference type="PANTHER" id="PTHR22993">
    <property type="entry name" value="FORMAMIDOPYRIMIDINE-DNA GLYCOSYLASE"/>
    <property type="match status" value="1"/>
</dbReference>
<dbReference type="PANTHER" id="PTHR22993:SF9">
    <property type="entry name" value="FORMAMIDOPYRIMIDINE-DNA GLYCOSYLASE"/>
    <property type="match status" value="1"/>
</dbReference>
<dbReference type="Pfam" id="PF01149">
    <property type="entry name" value="Fapy_DNA_glyco"/>
    <property type="match status" value="1"/>
</dbReference>
<dbReference type="Pfam" id="PF06831">
    <property type="entry name" value="H2TH"/>
    <property type="match status" value="1"/>
</dbReference>
<dbReference type="Pfam" id="PF06827">
    <property type="entry name" value="zf-FPG_IleRS"/>
    <property type="match status" value="1"/>
</dbReference>
<dbReference type="SMART" id="SM00898">
    <property type="entry name" value="Fapy_DNA_glyco"/>
    <property type="match status" value="1"/>
</dbReference>
<dbReference type="SMART" id="SM01232">
    <property type="entry name" value="H2TH"/>
    <property type="match status" value="1"/>
</dbReference>
<dbReference type="SUPFAM" id="SSF57716">
    <property type="entry name" value="Glucocorticoid receptor-like (DNA-binding domain)"/>
    <property type="match status" value="1"/>
</dbReference>
<dbReference type="SUPFAM" id="SSF81624">
    <property type="entry name" value="N-terminal domain of MutM-like DNA repair proteins"/>
    <property type="match status" value="1"/>
</dbReference>
<dbReference type="SUPFAM" id="SSF46946">
    <property type="entry name" value="S13-like H2TH domain"/>
    <property type="match status" value="1"/>
</dbReference>
<dbReference type="PROSITE" id="PS51068">
    <property type="entry name" value="FPG_CAT"/>
    <property type="match status" value="1"/>
</dbReference>
<dbReference type="PROSITE" id="PS51066">
    <property type="entry name" value="ZF_FPG_2"/>
    <property type="match status" value="1"/>
</dbReference>
<name>FPG_CROS8</name>
<evidence type="ECO:0000250" key="1"/>
<evidence type="ECO:0000255" key="2">
    <source>
        <dbReference type="HAMAP-Rule" id="MF_00103"/>
    </source>
</evidence>
<gene>
    <name evidence="2" type="primary">mutM</name>
    <name evidence="2" type="synonym">fpg</name>
    <name type="ordered locus">ESA_04096</name>
</gene>
<sequence length="269" mass="30322">MPELPEVETSRRGIEPHLVGETILHAVVRNGRLRWPVSDEIHALSDKPILSVQRRAKYLLLELPDGWIIIHLGMSGSLRILPEERPAEKHDHVDLVMSNGKVLRYTDPRRFGAWLWTRELEGHNVLAHLGPEPLSDAFNGAYLREKCAKKKVAIKPWLMDNKLVVGVGNIYASESLFAAGIHPDRLASSLSEKECELLAQAIKAVLLRSIEQGGTTLRDFLQSDGKPGYFAQELQVYGREGEPCRVCGTPILAGKHAQRRTYWCRRCQK</sequence>
<accession>A7MQ97</accession>
<comment type="function">
    <text evidence="2">Involved in base excision repair of DNA damaged by oxidation or by mutagenic agents. Acts as a DNA glycosylase that recognizes and removes damaged bases. Has a preference for oxidized purines, such as 7,8-dihydro-8-oxoguanine (8-oxoG). Has AP (apurinic/apyrimidinic) lyase activity and introduces nicks in the DNA strand. Cleaves the DNA backbone by beta-delta elimination to generate a single-strand break at the site of the removed base with both 3'- and 5'-phosphates.</text>
</comment>
<comment type="catalytic activity">
    <reaction evidence="2">
        <text>Hydrolysis of DNA containing ring-opened 7-methylguanine residues, releasing 2,6-diamino-4-hydroxy-5-(N-methyl)formamidopyrimidine.</text>
        <dbReference type="EC" id="3.2.2.23"/>
    </reaction>
</comment>
<comment type="catalytic activity">
    <reaction evidence="2">
        <text>2'-deoxyribonucleotide-(2'-deoxyribose 5'-phosphate)-2'-deoxyribonucleotide-DNA = a 3'-end 2'-deoxyribonucleotide-(2,3-dehydro-2,3-deoxyribose 5'-phosphate)-DNA + a 5'-end 5'-phospho-2'-deoxyribonucleoside-DNA + H(+)</text>
        <dbReference type="Rhea" id="RHEA:66592"/>
        <dbReference type="Rhea" id="RHEA-COMP:13180"/>
        <dbReference type="Rhea" id="RHEA-COMP:16897"/>
        <dbReference type="Rhea" id="RHEA-COMP:17067"/>
        <dbReference type="ChEBI" id="CHEBI:15378"/>
        <dbReference type="ChEBI" id="CHEBI:136412"/>
        <dbReference type="ChEBI" id="CHEBI:157695"/>
        <dbReference type="ChEBI" id="CHEBI:167181"/>
        <dbReference type="EC" id="4.2.99.18"/>
    </reaction>
</comment>
<comment type="cofactor">
    <cofactor evidence="2">
        <name>Zn(2+)</name>
        <dbReference type="ChEBI" id="CHEBI:29105"/>
    </cofactor>
    <text evidence="2">Binds 1 zinc ion per subunit.</text>
</comment>
<comment type="subunit">
    <text evidence="2">Monomer.</text>
</comment>
<comment type="similarity">
    <text evidence="2">Belongs to the FPG family.</text>
</comment>
<protein>
    <recommendedName>
        <fullName evidence="2">Formamidopyrimidine-DNA glycosylase</fullName>
        <shortName evidence="2">Fapy-DNA glycosylase</shortName>
        <ecNumber evidence="2">3.2.2.23</ecNumber>
    </recommendedName>
    <alternativeName>
        <fullName evidence="2">DNA-(apurinic or apyrimidinic site) lyase MutM</fullName>
        <shortName evidence="2">AP lyase MutM</shortName>
        <ecNumber evidence="2">4.2.99.18</ecNumber>
    </alternativeName>
</protein>
<keyword id="KW-0227">DNA damage</keyword>
<keyword id="KW-0234">DNA repair</keyword>
<keyword id="KW-0238">DNA-binding</keyword>
<keyword id="KW-0326">Glycosidase</keyword>
<keyword id="KW-0378">Hydrolase</keyword>
<keyword id="KW-0456">Lyase</keyword>
<keyword id="KW-0479">Metal-binding</keyword>
<keyword id="KW-0511">Multifunctional enzyme</keyword>
<keyword id="KW-1185">Reference proteome</keyword>
<keyword id="KW-0862">Zinc</keyword>
<keyword id="KW-0863">Zinc-finger</keyword>
<organism>
    <name type="scientific">Cronobacter sakazakii (strain ATCC BAA-894)</name>
    <name type="common">Enterobacter sakazakii</name>
    <dbReference type="NCBI Taxonomy" id="290339"/>
    <lineage>
        <taxon>Bacteria</taxon>
        <taxon>Pseudomonadati</taxon>
        <taxon>Pseudomonadota</taxon>
        <taxon>Gammaproteobacteria</taxon>
        <taxon>Enterobacterales</taxon>
        <taxon>Enterobacteriaceae</taxon>
        <taxon>Cronobacter</taxon>
    </lineage>
</organism>
<proteinExistence type="inferred from homology"/>